<gene>
    <name type="primary">nuo-32</name>
    <name type="ORF">NCU05299</name>
</gene>
<reference key="1">
    <citation type="journal article" date="1991" name="Biochim. Biophys. Acta">
        <title>Primary structure of the nuclear-encoded 29.9 kDa subunit of NADH: ubiquinone reductase from Neurospora crassa mitochondria.</title>
        <authorList>
            <person name="van der Pas J.C."/>
            <person name="Roehlen D.-A."/>
            <person name="Weidner U."/>
            <person name="Weiss H."/>
        </authorList>
    </citation>
    <scope>NUCLEOTIDE SEQUENCE [MRNA]</scope>
    <scope>PROTEIN SEQUENCE OF 9-31</scope>
    <source>
        <strain>74-ORS-6a / FGSC 4200</strain>
    </source>
</reference>
<reference key="2">
    <citation type="journal article" date="2003" name="Nature">
        <title>The genome sequence of the filamentous fungus Neurospora crassa.</title>
        <authorList>
            <person name="Galagan J.E."/>
            <person name="Calvo S.E."/>
            <person name="Borkovich K.A."/>
            <person name="Selker E.U."/>
            <person name="Read N.D."/>
            <person name="Jaffe D.B."/>
            <person name="FitzHugh W."/>
            <person name="Ma L.-J."/>
            <person name="Smirnov S."/>
            <person name="Purcell S."/>
            <person name="Rehman B."/>
            <person name="Elkins T."/>
            <person name="Engels R."/>
            <person name="Wang S."/>
            <person name="Nielsen C.B."/>
            <person name="Butler J."/>
            <person name="Endrizzi M."/>
            <person name="Qui D."/>
            <person name="Ianakiev P."/>
            <person name="Bell-Pedersen D."/>
            <person name="Nelson M.A."/>
            <person name="Werner-Washburne M."/>
            <person name="Selitrennikoff C.P."/>
            <person name="Kinsey J.A."/>
            <person name="Braun E.L."/>
            <person name="Zelter A."/>
            <person name="Schulte U."/>
            <person name="Kothe G.O."/>
            <person name="Jedd G."/>
            <person name="Mewes H.-W."/>
            <person name="Staben C."/>
            <person name="Marcotte E."/>
            <person name="Greenberg D."/>
            <person name="Roy A."/>
            <person name="Foley K."/>
            <person name="Naylor J."/>
            <person name="Stange-Thomann N."/>
            <person name="Barrett R."/>
            <person name="Gnerre S."/>
            <person name="Kamal M."/>
            <person name="Kamvysselis M."/>
            <person name="Mauceli E.W."/>
            <person name="Bielke C."/>
            <person name="Rudd S."/>
            <person name="Frishman D."/>
            <person name="Krystofova S."/>
            <person name="Rasmussen C."/>
            <person name="Metzenberg R.L."/>
            <person name="Perkins D.D."/>
            <person name="Kroken S."/>
            <person name="Cogoni C."/>
            <person name="Macino G."/>
            <person name="Catcheside D.E.A."/>
            <person name="Li W."/>
            <person name="Pratt R.J."/>
            <person name="Osmani S.A."/>
            <person name="DeSouza C.P.C."/>
            <person name="Glass N.L."/>
            <person name="Orbach M.J."/>
            <person name="Berglund J.A."/>
            <person name="Voelker R."/>
            <person name="Yarden O."/>
            <person name="Plamann M."/>
            <person name="Seiler S."/>
            <person name="Dunlap J.C."/>
            <person name="Radford A."/>
            <person name="Aramayo R."/>
            <person name="Natvig D.O."/>
            <person name="Alex L.A."/>
            <person name="Mannhaupt G."/>
            <person name="Ebbole D.J."/>
            <person name="Freitag M."/>
            <person name="Paulsen I."/>
            <person name="Sachs M.S."/>
            <person name="Lander E.S."/>
            <person name="Nusbaum C."/>
            <person name="Birren B.W."/>
        </authorList>
    </citation>
    <scope>NUCLEOTIDE SEQUENCE [LARGE SCALE GENOMIC DNA]</scope>
    <source>
        <strain>ATCC 24698 / 74-OR23-1A / CBS 708.71 / DSM 1257 / FGSC 987</strain>
    </source>
</reference>
<organism>
    <name type="scientific">Neurospora crassa (strain ATCC 24698 / 74-OR23-1A / CBS 708.71 / DSM 1257 / FGSC 987)</name>
    <dbReference type="NCBI Taxonomy" id="367110"/>
    <lineage>
        <taxon>Eukaryota</taxon>
        <taxon>Fungi</taxon>
        <taxon>Dikarya</taxon>
        <taxon>Ascomycota</taxon>
        <taxon>Pezizomycotina</taxon>
        <taxon>Sordariomycetes</taxon>
        <taxon>Sordariomycetidae</taxon>
        <taxon>Sordariales</taxon>
        <taxon>Sordariaceae</taxon>
        <taxon>Neurospora</taxon>
    </lineage>
</organism>
<dbReference type="EMBL" id="X56237">
    <property type="protein sequence ID" value="CAA39694.1"/>
    <property type="molecule type" value="mRNA"/>
</dbReference>
<dbReference type="EMBL" id="CM002239">
    <property type="protein sequence ID" value="EAA32834.1"/>
    <property type="molecule type" value="Genomic_DNA"/>
</dbReference>
<dbReference type="PIR" id="S17191">
    <property type="entry name" value="S17191"/>
</dbReference>
<dbReference type="SMR" id="P24919"/>
<dbReference type="STRING" id="367110.P24919"/>
<dbReference type="TCDB" id="3.D.1.6.2">
    <property type="family name" value="the h+ or na+-translocating nadh dehydrogenase (ndh) family"/>
</dbReference>
<dbReference type="PaxDb" id="5141-EFNCRP00000004933"/>
<dbReference type="EnsemblFungi" id="EAA32834">
    <property type="protein sequence ID" value="EAA32834"/>
    <property type="gene ID" value="NCU05299"/>
</dbReference>
<dbReference type="KEGG" id="ncr:NCU05299"/>
<dbReference type="VEuPathDB" id="FungiDB:NCU05299"/>
<dbReference type="HOGENOM" id="CLU_084284_0_0_1"/>
<dbReference type="InParanoid" id="P24919"/>
<dbReference type="OMA" id="WTYFERG"/>
<dbReference type="OrthoDB" id="286811at2759"/>
<dbReference type="Proteomes" id="UP000001805">
    <property type="component" value="Chromosome 4, Linkage Group IV"/>
</dbReference>
<dbReference type="GO" id="GO:0005743">
    <property type="term" value="C:mitochondrial inner membrane"/>
    <property type="evidence" value="ECO:0007669"/>
    <property type="project" value="UniProtKB-SubCell"/>
</dbReference>
<dbReference type="GO" id="GO:0045271">
    <property type="term" value="C:respiratory chain complex I"/>
    <property type="evidence" value="ECO:0000318"/>
    <property type="project" value="GO_Central"/>
</dbReference>
<dbReference type="GO" id="GO:0022904">
    <property type="term" value="P:respiratory electron transport chain"/>
    <property type="evidence" value="ECO:0007669"/>
    <property type="project" value="InterPro"/>
</dbReference>
<dbReference type="InterPro" id="IPR006806">
    <property type="entry name" value="NDUFA5"/>
</dbReference>
<dbReference type="PANTHER" id="PTHR12653:SF0">
    <property type="entry name" value="NADH DEHYDROGENASE [UBIQUINONE] 1 ALPHA SUBCOMPLEX SUBUNIT 5"/>
    <property type="match status" value="1"/>
</dbReference>
<dbReference type="PANTHER" id="PTHR12653">
    <property type="entry name" value="NADH-UBIQUINONE OXIDOREDUCTASE 13 KD-B SUBUNIT"/>
    <property type="match status" value="1"/>
</dbReference>
<dbReference type="Pfam" id="PF04716">
    <property type="entry name" value="ETC_C1_NDUFA5"/>
    <property type="match status" value="1"/>
</dbReference>
<protein>
    <recommendedName>
        <fullName>NADH-ubiquinone oxidoreductase 29.9 kDa subunit, mitochondrial</fullName>
    </recommendedName>
    <alternativeName>
        <fullName>Complex I-29.9kD</fullName>
        <shortName>CI-29.9kD</shortName>
    </alternativeName>
</protein>
<name>NDUA5_NEUCR</name>
<feature type="transit peptide" description="Mitochondrion" evidence="1">
    <location>
        <begin position="1"/>
        <end position="8"/>
    </location>
</feature>
<feature type="chain" id="PRO_0000019996" description="NADH-ubiquinone oxidoreductase 29.9 kDa subunit, mitochondrial">
    <location>
        <begin position="9"/>
        <end position="273"/>
    </location>
</feature>
<evidence type="ECO:0000269" key="1">
    <source>
    </source>
</evidence>
<evidence type="ECO:0000305" key="2"/>
<keyword id="KW-0903">Direct protein sequencing</keyword>
<keyword id="KW-0249">Electron transport</keyword>
<keyword id="KW-0472">Membrane</keyword>
<keyword id="KW-0496">Mitochondrion</keyword>
<keyword id="KW-0999">Mitochondrion inner membrane</keyword>
<keyword id="KW-1185">Reference proteome</keyword>
<keyword id="KW-0679">Respiratory chain</keyword>
<keyword id="KW-0809">Transit peptide</keyword>
<keyword id="KW-0813">Transport</keyword>
<sequence>MRAALRLLATATATVRPSARFLKPGSPTGLTGLGTHPSPRSALLYLYNHTLDKLKQIPEHSLYRQSAEALTKHRLAIVEQYVPDGYDAWQERARKLLEKHKSDLTARQFDGQHARLVEGPDGRAYFIRQMVPPQDWRDVEWDGAVLDPHFSWVQTGEDVVGAVKLEDSDKLLELDKIRESDPVAYRQGLRDLGIKMGGVVEDKSPVEWESEPPLSAEQIAEMEARIGSGLIEEVVQVAEGELKLVDIMTQARPWEALEEEAPEGQWTYFERKE</sequence>
<comment type="function">
    <text>Accessory subunit of the mitochondrial membrane respiratory chain NADH dehydrogenase (Complex I), that is believed not to be involved in catalysis. Complex I functions in the transfer of electrons from NADH to the respiratory chain. The immediate electron acceptor for the enzyme is believed to be ubiquinone.</text>
</comment>
<comment type="subunit">
    <text>Complex I is composed of about 40 different subunits.</text>
</comment>
<comment type="subcellular location">
    <subcellularLocation>
        <location>Mitochondrion inner membrane</location>
        <topology>Peripheral membrane protein</topology>
        <orientation>Matrix side</orientation>
    </subcellularLocation>
</comment>
<comment type="similarity">
    <text evidence="2">Belongs to the complex I NDUFA5 subunit family.</text>
</comment>
<proteinExistence type="evidence at protein level"/>
<accession>P24919</accession>
<accession>Q7RVF5</accession>